<keyword id="KW-0488">Methylation</keyword>
<keyword id="KW-0687">Ribonucleoprotein</keyword>
<keyword id="KW-0689">Ribosomal protein</keyword>
<keyword id="KW-0694">RNA-binding</keyword>
<keyword id="KW-0699">rRNA-binding</keyword>
<accession>A1JS47</accession>
<feature type="chain" id="PRO_1000052167" description="Large ribosomal subunit protein uL3">
    <location>
        <begin position="1"/>
        <end position="209"/>
    </location>
</feature>
<feature type="region of interest" description="Disordered" evidence="2">
    <location>
        <begin position="133"/>
        <end position="152"/>
    </location>
</feature>
<feature type="modified residue" description="N5-methylglutamine" evidence="1">
    <location>
        <position position="150"/>
    </location>
</feature>
<evidence type="ECO:0000255" key="1">
    <source>
        <dbReference type="HAMAP-Rule" id="MF_01325"/>
    </source>
</evidence>
<evidence type="ECO:0000256" key="2">
    <source>
        <dbReference type="SAM" id="MobiDB-lite"/>
    </source>
</evidence>
<evidence type="ECO:0000305" key="3"/>
<proteinExistence type="inferred from homology"/>
<dbReference type="EMBL" id="AM286415">
    <property type="protein sequence ID" value="CAL13942.1"/>
    <property type="molecule type" value="Genomic_DNA"/>
</dbReference>
<dbReference type="RefSeq" id="WP_004709250.1">
    <property type="nucleotide sequence ID" value="NC_008800.1"/>
</dbReference>
<dbReference type="RefSeq" id="YP_001008068.1">
    <property type="nucleotide sequence ID" value="NC_008800.1"/>
</dbReference>
<dbReference type="SMR" id="A1JS47"/>
<dbReference type="GeneID" id="97454231"/>
<dbReference type="KEGG" id="yen:YE3923"/>
<dbReference type="PATRIC" id="fig|393305.7.peg.4173"/>
<dbReference type="eggNOG" id="COG0087">
    <property type="taxonomic scope" value="Bacteria"/>
</dbReference>
<dbReference type="HOGENOM" id="CLU_044142_4_1_6"/>
<dbReference type="OrthoDB" id="9806135at2"/>
<dbReference type="Proteomes" id="UP000000642">
    <property type="component" value="Chromosome"/>
</dbReference>
<dbReference type="GO" id="GO:0022625">
    <property type="term" value="C:cytosolic large ribosomal subunit"/>
    <property type="evidence" value="ECO:0007669"/>
    <property type="project" value="TreeGrafter"/>
</dbReference>
<dbReference type="GO" id="GO:0019843">
    <property type="term" value="F:rRNA binding"/>
    <property type="evidence" value="ECO:0007669"/>
    <property type="project" value="UniProtKB-UniRule"/>
</dbReference>
<dbReference type="GO" id="GO:0003735">
    <property type="term" value="F:structural constituent of ribosome"/>
    <property type="evidence" value="ECO:0007669"/>
    <property type="project" value="InterPro"/>
</dbReference>
<dbReference type="GO" id="GO:0006412">
    <property type="term" value="P:translation"/>
    <property type="evidence" value="ECO:0007669"/>
    <property type="project" value="UniProtKB-UniRule"/>
</dbReference>
<dbReference type="FunFam" id="2.40.30.10:FF:000004">
    <property type="entry name" value="50S ribosomal protein L3"/>
    <property type="match status" value="1"/>
</dbReference>
<dbReference type="FunFam" id="3.30.160.810:FF:000001">
    <property type="entry name" value="50S ribosomal protein L3"/>
    <property type="match status" value="1"/>
</dbReference>
<dbReference type="Gene3D" id="3.30.160.810">
    <property type="match status" value="1"/>
</dbReference>
<dbReference type="Gene3D" id="2.40.30.10">
    <property type="entry name" value="Translation factors"/>
    <property type="match status" value="1"/>
</dbReference>
<dbReference type="HAMAP" id="MF_01325_B">
    <property type="entry name" value="Ribosomal_uL3_B"/>
    <property type="match status" value="1"/>
</dbReference>
<dbReference type="InterPro" id="IPR000597">
    <property type="entry name" value="Ribosomal_uL3"/>
</dbReference>
<dbReference type="InterPro" id="IPR019927">
    <property type="entry name" value="Ribosomal_uL3_bac/org-type"/>
</dbReference>
<dbReference type="InterPro" id="IPR019926">
    <property type="entry name" value="Ribosomal_uL3_CS"/>
</dbReference>
<dbReference type="InterPro" id="IPR009000">
    <property type="entry name" value="Transl_B-barrel_sf"/>
</dbReference>
<dbReference type="NCBIfam" id="TIGR03625">
    <property type="entry name" value="L3_bact"/>
    <property type="match status" value="1"/>
</dbReference>
<dbReference type="PANTHER" id="PTHR11229">
    <property type="entry name" value="50S RIBOSOMAL PROTEIN L3"/>
    <property type="match status" value="1"/>
</dbReference>
<dbReference type="PANTHER" id="PTHR11229:SF16">
    <property type="entry name" value="LARGE RIBOSOMAL SUBUNIT PROTEIN UL3C"/>
    <property type="match status" value="1"/>
</dbReference>
<dbReference type="Pfam" id="PF00297">
    <property type="entry name" value="Ribosomal_L3"/>
    <property type="match status" value="1"/>
</dbReference>
<dbReference type="SUPFAM" id="SSF50447">
    <property type="entry name" value="Translation proteins"/>
    <property type="match status" value="1"/>
</dbReference>
<dbReference type="PROSITE" id="PS00474">
    <property type="entry name" value="RIBOSOMAL_L3"/>
    <property type="match status" value="1"/>
</dbReference>
<sequence>MIGLVGKKVGMTRIFTEDGVSIPVTVIEIEANRVTQVKSLENDGYRAVQVTTGAKKANRVTKPEAGHFAKAGVEAGRGLWEFRLPEGQEFTAGQEISVEIFADVKKVDVTGTSKGKGFAGTVKRWNFRTQDATHGNSLSHRVPGSIGQNQTPGKVFKGKKMAGHLGDERVTVQSLDVVRVDAERNLLLVKGAVPGATGGNLIVKPAVKA</sequence>
<protein>
    <recommendedName>
        <fullName evidence="1">Large ribosomal subunit protein uL3</fullName>
    </recommendedName>
    <alternativeName>
        <fullName evidence="3">50S ribosomal protein L3</fullName>
    </alternativeName>
</protein>
<organism>
    <name type="scientific">Yersinia enterocolitica serotype O:8 / biotype 1B (strain NCTC 13174 / 8081)</name>
    <dbReference type="NCBI Taxonomy" id="393305"/>
    <lineage>
        <taxon>Bacteria</taxon>
        <taxon>Pseudomonadati</taxon>
        <taxon>Pseudomonadota</taxon>
        <taxon>Gammaproteobacteria</taxon>
        <taxon>Enterobacterales</taxon>
        <taxon>Yersiniaceae</taxon>
        <taxon>Yersinia</taxon>
    </lineage>
</organism>
<name>RL3_YERE8</name>
<gene>
    <name evidence="1" type="primary">rplC</name>
    <name type="ordered locus">YE3923</name>
</gene>
<reference key="1">
    <citation type="journal article" date="2006" name="PLoS Genet.">
        <title>The complete genome sequence and comparative genome analysis of the high pathogenicity Yersinia enterocolitica strain 8081.</title>
        <authorList>
            <person name="Thomson N.R."/>
            <person name="Howard S."/>
            <person name="Wren B.W."/>
            <person name="Holden M.T.G."/>
            <person name="Crossman L."/>
            <person name="Challis G.L."/>
            <person name="Churcher C."/>
            <person name="Mungall K."/>
            <person name="Brooks K."/>
            <person name="Chillingworth T."/>
            <person name="Feltwell T."/>
            <person name="Abdellah Z."/>
            <person name="Hauser H."/>
            <person name="Jagels K."/>
            <person name="Maddison M."/>
            <person name="Moule S."/>
            <person name="Sanders M."/>
            <person name="Whitehead S."/>
            <person name="Quail M.A."/>
            <person name="Dougan G."/>
            <person name="Parkhill J."/>
            <person name="Prentice M.B."/>
        </authorList>
    </citation>
    <scope>NUCLEOTIDE SEQUENCE [LARGE SCALE GENOMIC DNA]</scope>
    <source>
        <strain>NCTC 13174 / 8081</strain>
    </source>
</reference>
<comment type="function">
    <text evidence="1">One of the primary rRNA binding proteins, it binds directly near the 3'-end of the 23S rRNA, where it nucleates assembly of the 50S subunit.</text>
</comment>
<comment type="subunit">
    <text evidence="1">Part of the 50S ribosomal subunit. Forms a cluster with proteins L14 and L19.</text>
</comment>
<comment type="PTM">
    <text evidence="1">Methylated by PrmB.</text>
</comment>
<comment type="similarity">
    <text evidence="1">Belongs to the universal ribosomal protein uL3 family.</text>
</comment>